<gene>
    <name type="primary">TMSB10</name>
</gene>
<proteinExistence type="evidence at protein level"/>
<sequence>MADKPDMGEINSFDKAKLKKTETQEKNTLPTKETIEQEKQAK</sequence>
<evidence type="ECO:0000250" key="1"/>
<evidence type="ECO:0000250" key="2">
    <source>
        <dbReference type="UniProtKB" id="P21752"/>
    </source>
</evidence>
<evidence type="ECO:0000250" key="3">
    <source>
        <dbReference type="UniProtKB" id="P63313"/>
    </source>
</evidence>
<evidence type="ECO:0000250" key="4">
    <source>
        <dbReference type="UniProtKB" id="Q6ZWY8"/>
    </source>
</evidence>
<evidence type="ECO:0000256" key="5">
    <source>
        <dbReference type="SAM" id="MobiDB-lite"/>
    </source>
</evidence>
<evidence type="ECO:0000269" key="6">
    <source>
    </source>
</evidence>
<evidence type="ECO:0000269" key="7">
    <source>
    </source>
</evidence>
<evidence type="ECO:0000305" key="8"/>
<name>TYB10_PIG</name>
<dbReference type="EMBL" id="DQ629174">
    <property type="protein sequence ID" value="ABK55658.1"/>
    <property type="molecule type" value="mRNA"/>
</dbReference>
<dbReference type="PIR" id="A60290">
    <property type="entry name" value="A60290"/>
</dbReference>
<dbReference type="RefSeq" id="NP_001090951.1">
    <property type="nucleotide sequence ID" value="NM_001097482.1"/>
</dbReference>
<dbReference type="BMRB" id="P21753"/>
<dbReference type="SMR" id="P21753"/>
<dbReference type="FunCoup" id="P21753">
    <property type="interactions" value="465"/>
</dbReference>
<dbReference type="STRING" id="9823.ENSSSCP00000008804"/>
<dbReference type="PaxDb" id="9823-ENSSSCP00000008804"/>
<dbReference type="PeptideAtlas" id="P21753"/>
<dbReference type="Ensembl" id="ENSSSCT00000009030.5">
    <property type="protein sequence ID" value="ENSSSCP00000008804.4"/>
    <property type="gene ID" value="ENSSSCG00000008245.5"/>
</dbReference>
<dbReference type="Ensembl" id="ENSSSCT00025094980.1">
    <property type="protein sequence ID" value="ENSSSCP00025041699.1"/>
    <property type="gene ID" value="ENSSSCG00025069121.1"/>
</dbReference>
<dbReference type="Ensembl" id="ENSSSCT00030014560.1">
    <property type="protein sequence ID" value="ENSSSCP00030006543.1"/>
    <property type="gene ID" value="ENSSSCG00030010611.1"/>
</dbReference>
<dbReference type="Ensembl" id="ENSSSCT00035002863.1">
    <property type="protein sequence ID" value="ENSSSCP00035000971.1"/>
    <property type="gene ID" value="ENSSSCG00035002288.1"/>
</dbReference>
<dbReference type="Ensembl" id="ENSSSCT00045055044.1">
    <property type="protein sequence ID" value="ENSSSCP00045038367.1"/>
    <property type="gene ID" value="ENSSSCG00045032257.1"/>
</dbReference>
<dbReference type="Ensembl" id="ENSSSCT00050035231.1">
    <property type="protein sequence ID" value="ENSSSCP00050014655.1"/>
    <property type="gene ID" value="ENSSSCG00050026180.1"/>
</dbReference>
<dbReference type="Ensembl" id="ENSSSCT00055049136.1">
    <property type="protein sequence ID" value="ENSSSCP00055039238.1"/>
    <property type="gene ID" value="ENSSSCG00055024901.1"/>
</dbReference>
<dbReference type="Ensembl" id="ENSSSCT00065065110.1">
    <property type="protein sequence ID" value="ENSSSCP00065028219.1"/>
    <property type="gene ID" value="ENSSSCG00065047592.1"/>
</dbReference>
<dbReference type="Ensembl" id="ENSSSCT00065065857.1">
    <property type="protein sequence ID" value="ENSSSCP00065028528.1"/>
    <property type="gene ID" value="ENSSSCG00065048143.1"/>
</dbReference>
<dbReference type="Ensembl" id="ENSSSCT00070058366.1">
    <property type="protein sequence ID" value="ENSSSCP00070049631.1"/>
    <property type="gene ID" value="ENSSSCG00070029092.1"/>
</dbReference>
<dbReference type="Ensembl" id="ENSSSCT00085037564">
    <property type="protein sequence ID" value="ENSSSCP00085026129"/>
    <property type="gene ID" value="ENSSSCG00085019678"/>
</dbReference>
<dbReference type="Ensembl" id="ENSSSCT00090058184">
    <property type="protein sequence ID" value="ENSSSCP00090036235"/>
    <property type="gene ID" value="ENSSSCG00090032925"/>
</dbReference>
<dbReference type="Ensembl" id="ENSSSCT00105064781">
    <property type="protein sequence ID" value="ENSSSCP00105046134"/>
    <property type="gene ID" value="ENSSSCG00105033957"/>
</dbReference>
<dbReference type="Ensembl" id="ENSSSCT00110002682">
    <property type="protein sequence ID" value="ENSSSCP00110002092"/>
    <property type="gene ID" value="ENSSSCG00110001343"/>
</dbReference>
<dbReference type="Ensembl" id="ENSSSCT00115012712">
    <property type="protein sequence ID" value="ENSSSCP00115012013"/>
    <property type="gene ID" value="ENSSSCG00115007298"/>
</dbReference>
<dbReference type="Ensembl" id="ENSSSCT00130025475">
    <property type="protein sequence ID" value="ENSSSCP00130017513"/>
    <property type="gene ID" value="ENSSSCG00130013395"/>
</dbReference>
<dbReference type="GeneID" id="100037998"/>
<dbReference type="KEGG" id="ssc:100037998"/>
<dbReference type="CTD" id="9168"/>
<dbReference type="eggNOG" id="KOG4794">
    <property type="taxonomic scope" value="Eukaryota"/>
</dbReference>
<dbReference type="GeneTree" id="ENSGT01130000278435"/>
<dbReference type="HOGENOM" id="CLU_208046_0_1_1"/>
<dbReference type="InParanoid" id="P21753"/>
<dbReference type="OrthoDB" id="2151618at2759"/>
<dbReference type="Proteomes" id="UP000008227">
    <property type="component" value="Chromosome 3"/>
</dbReference>
<dbReference type="Proteomes" id="UP000314985">
    <property type="component" value="Chromosome 3"/>
</dbReference>
<dbReference type="Proteomes" id="UP000694570">
    <property type="component" value="Unplaced"/>
</dbReference>
<dbReference type="Proteomes" id="UP000694571">
    <property type="component" value="Unplaced"/>
</dbReference>
<dbReference type="Proteomes" id="UP000694720">
    <property type="component" value="Unplaced"/>
</dbReference>
<dbReference type="Proteomes" id="UP000694722">
    <property type="component" value="Unplaced"/>
</dbReference>
<dbReference type="Proteomes" id="UP000694723">
    <property type="component" value="Unplaced"/>
</dbReference>
<dbReference type="Proteomes" id="UP000694724">
    <property type="component" value="Unplaced"/>
</dbReference>
<dbReference type="Proteomes" id="UP000694725">
    <property type="component" value="Unplaced"/>
</dbReference>
<dbReference type="Proteomes" id="UP000694726">
    <property type="component" value="Unplaced"/>
</dbReference>
<dbReference type="Proteomes" id="UP000694727">
    <property type="component" value="Unplaced"/>
</dbReference>
<dbReference type="Proteomes" id="UP000694728">
    <property type="component" value="Unplaced"/>
</dbReference>
<dbReference type="GO" id="GO:0005737">
    <property type="term" value="C:cytoplasm"/>
    <property type="evidence" value="ECO:0007669"/>
    <property type="project" value="UniProtKB-KW"/>
</dbReference>
<dbReference type="GO" id="GO:0005856">
    <property type="term" value="C:cytoskeleton"/>
    <property type="evidence" value="ECO:0007669"/>
    <property type="project" value="UniProtKB-SubCell"/>
</dbReference>
<dbReference type="GO" id="GO:0003785">
    <property type="term" value="F:actin monomer binding"/>
    <property type="evidence" value="ECO:0007669"/>
    <property type="project" value="InterPro"/>
</dbReference>
<dbReference type="GO" id="GO:0007015">
    <property type="term" value="P:actin filament organization"/>
    <property type="evidence" value="ECO:0007669"/>
    <property type="project" value="InterPro"/>
</dbReference>
<dbReference type="FunFam" id="1.20.5.520:FF:000001">
    <property type="entry name" value="Thymosin beta"/>
    <property type="match status" value="1"/>
</dbReference>
<dbReference type="Gene3D" id="1.20.5.520">
    <property type="entry name" value="Single helix bin"/>
    <property type="match status" value="1"/>
</dbReference>
<dbReference type="InterPro" id="IPR001152">
    <property type="entry name" value="Beta-thymosin"/>
</dbReference>
<dbReference type="InterPro" id="IPR038386">
    <property type="entry name" value="Beta-thymosin_sf"/>
</dbReference>
<dbReference type="PANTHER" id="PTHR12021">
    <property type="entry name" value="THYMOSIN BETA"/>
    <property type="match status" value="1"/>
</dbReference>
<dbReference type="PANTHER" id="PTHR12021:SF10">
    <property type="entry name" value="THYMOSIN BETA-10"/>
    <property type="match status" value="1"/>
</dbReference>
<dbReference type="Pfam" id="PF01290">
    <property type="entry name" value="Thymosin"/>
    <property type="match status" value="1"/>
</dbReference>
<dbReference type="PIRSF" id="PIRSF001828">
    <property type="entry name" value="Thymosin_beta"/>
    <property type="match status" value="1"/>
</dbReference>
<dbReference type="SMART" id="SM00152">
    <property type="entry name" value="THY"/>
    <property type="match status" value="1"/>
</dbReference>
<dbReference type="PROSITE" id="PS00500">
    <property type="entry name" value="THYMOSIN_B4"/>
    <property type="match status" value="1"/>
</dbReference>
<protein>
    <recommendedName>
        <fullName>Thymosin beta-10</fullName>
    </recommendedName>
    <alternativeName>
        <fullName>Thymosin beta-9</fullName>
    </alternativeName>
</protein>
<feature type="initiator methionine" description="Removed" evidence="2 6 7">
    <location>
        <position position="1"/>
    </location>
</feature>
<feature type="chain" id="PRO_0000045929" description="Thymosin beta-10">
    <location>
        <begin position="2"/>
        <end position="42"/>
    </location>
</feature>
<feature type="region of interest" description="Disordered" evidence="5">
    <location>
        <begin position="1"/>
        <end position="42"/>
    </location>
</feature>
<feature type="compositionally biased region" description="Basic and acidic residues" evidence="5">
    <location>
        <begin position="1"/>
        <end position="25"/>
    </location>
</feature>
<feature type="compositionally biased region" description="Basic and acidic residues" evidence="5">
    <location>
        <begin position="33"/>
        <end position="42"/>
    </location>
</feature>
<feature type="modified residue" description="N-acetylalanine" evidence="2">
    <location>
        <position position="2"/>
    </location>
</feature>
<feature type="modified residue" description="N6-acetyllysine" evidence="3">
    <location>
        <position position="4"/>
    </location>
</feature>
<feature type="modified residue" description="Phosphoserine" evidence="3">
    <location>
        <position position="12"/>
    </location>
</feature>
<feature type="modified residue" description="N6-acetyllysine" evidence="3">
    <location>
        <position position="15"/>
    </location>
</feature>
<feature type="modified residue" description="Phosphothreonine" evidence="4">
    <location>
        <position position="21"/>
    </location>
</feature>
<feature type="modified residue" description="Phosphothreonine" evidence="3">
    <location>
        <position position="23"/>
    </location>
</feature>
<feature type="modified residue" description="Phosphothreonine" evidence="3">
    <location>
        <position position="34"/>
    </location>
</feature>
<feature type="modified residue" description="N6-acetyllysine" evidence="3">
    <location>
        <position position="39"/>
    </location>
</feature>
<accession>P21753</accession>
<accession>A1XQV2</accession>
<keyword id="KW-0007">Acetylation</keyword>
<keyword id="KW-0009">Actin-binding</keyword>
<keyword id="KW-0963">Cytoplasm</keyword>
<keyword id="KW-0206">Cytoskeleton</keyword>
<keyword id="KW-0903">Direct protein sequencing</keyword>
<keyword id="KW-0597">Phosphoprotein</keyword>
<keyword id="KW-1185">Reference proteome</keyword>
<reference key="1">
    <citation type="submission" date="2006-05" db="EMBL/GenBank/DDBJ databases">
        <title>Generation and analysis of cDNA sequences derived from a porcine skeletal muscle library.</title>
        <authorList>
            <person name="Cai G."/>
            <person name="Chen Y."/>
            <person name="Wang C."/>
            <person name="Li J."/>
            <person name="Peng G."/>
            <person name="Zhang H."/>
        </authorList>
    </citation>
    <scope>NUCLEOTIDE SEQUENCE [LARGE SCALE MRNA]</scope>
    <source>
        <tissue>Longissimus dorsi muscle</tissue>
    </source>
</reference>
<reference key="2">
    <citation type="journal article" date="1989" name="Arch. Biochem. Biophys.">
        <title>Isolation and characterization of thymosin beta 9 Met from pork spleen.</title>
        <authorList>
            <person name="Hannappel E."/>
            <person name="Wartenberg F."/>
            <person name="Bustelo X.R."/>
        </authorList>
    </citation>
    <scope>PROTEIN SEQUENCE OF 2-42</scope>
    <source>
        <tissue>Spleen</tissue>
    </source>
</reference>
<reference key="3">
    <citation type="journal article" date="1990" name="Int. J. Pept. Protein Res.">
        <title>Structure and immunological properties of thymosin beta 9 Met, a new analog of thymosin beta 4 isolated from porcine thymus.</title>
        <authorList>
            <person name="Low T.L.K."/>
            <person name="Lin C.Y."/>
            <person name="Pan T.L."/>
            <person name="Chiou A.J."/>
            <person name="Tsugita A."/>
        </authorList>
    </citation>
    <scope>PROTEIN SEQUENCE OF 2-42</scope>
    <source>
        <tissue>Thymus</tissue>
    </source>
</reference>
<comment type="function">
    <text evidence="1">Plays an important role in the organization of the cytoskeleton. Binds to and sequesters actin monomers (G actin) and therefore inhibits actin polymerization (By similarity).</text>
</comment>
<comment type="subcellular location">
    <subcellularLocation>
        <location>Cytoplasm</location>
        <location>Cytoskeleton</location>
    </subcellularLocation>
</comment>
<comment type="similarity">
    <text evidence="8">Belongs to the thymosin beta family.</text>
</comment>
<organism>
    <name type="scientific">Sus scrofa</name>
    <name type="common">Pig</name>
    <dbReference type="NCBI Taxonomy" id="9823"/>
    <lineage>
        <taxon>Eukaryota</taxon>
        <taxon>Metazoa</taxon>
        <taxon>Chordata</taxon>
        <taxon>Craniata</taxon>
        <taxon>Vertebrata</taxon>
        <taxon>Euteleostomi</taxon>
        <taxon>Mammalia</taxon>
        <taxon>Eutheria</taxon>
        <taxon>Laurasiatheria</taxon>
        <taxon>Artiodactyla</taxon>
        <taxon>Suina</taxon>
        <taxon>Suidae</taxon>
        <taxon>Sus</taxon>
    </lineage>
</organism>